<feature type="signal peptide" evidence="2">
    <location>
        <begin position="1"/>
        <end position="20"/>
    </location>
</feature>
<feature type="propeptide" id="PRO_0000329995" evidence="1">
    <location>
        <begin position="21"/>
        <end position="190"/>
    </location>
</feature>
<feature type="chain" id="PRO_0000329996" description="Snake venom metalloproteinase atrolysin-B">
    <location>
        <begin position="191"/>
        <end position="393"/>
    </location>
</feature>
<feature type="propeptide" id="PRO_0000329997" evidence="1">
    <location>
        <begin position="394"/>
        <end position="414"/>
    </location>
</feature>
<feature type="domain" description="Peptidase M12B" evidence="3">
    <location>
        <begin position="197"/>
        <end position="393"/>
    </location>
</feature>
<feature type="active site" evidence="3 4">
    <location>
        <position position="334"/>
    </location>
</feature>
<feature type="binding site" evidence="1">
    <location>
        <position position="200"/>
    </location>
    <ligand>
        <name>Ca(2+)</name>
        <dbReference type="ChEBI" id="CHEBI:29108"/>
        <label>1</label>
    </ligand>
</feature>
<feature type="binding site" evidence="1">
    <location>
        <position position="284"/>
    </location>
    <ligand>
        <name>Ca(2+)</name>
        <dbReference type="ChEBI" id="CHEBI:29108"/>
        <label>1</label>
    </ligand>
</feature>
<feature type="binding site" evidence="1">
    <location>
        <position position="333"/>
    </location>
    <ligand>
        <name>Zn(2+)</name>
        <dbReference type="ChEBI" id="CHEBI:29105"/>
        <note>catalytic</note>
    </ligand>
</feature>
<feature type="binding site" evidence="1">
    <location>
        <position position="337"/>
    </location>
    <ligand>
        <name>Zn(2+)</name>
        <dbReference type="ChEBI" id="CHEBI:29105"/>
        <note>catalytic</note>
    </ligand>
</feature>
<feature type="binding site" evidence="1">
    <location>
        <position position="343"/>
    </location>
    <ligand>
        <name>Zn(2+)</name>
        <dbReference type="ChEBI" id="CHEBI:29105"/>
        <note>catalytic</note>
    </ligand>
</feature>
<feature type="binding site" evidence="1">
    <location>
        <position position="388"/>
    </location>
    <ligand>
        <name>Ca(2+)</name>
        <dbReference type="ChEBI" id="CHEBI:29108"/>
        <label>1</label>
    </ligand>
</feature>
<feature type="binding site" evidence="1">
    <location>
        <position position="391"/>
    </location>
    <ligand>
        <name>Ca(2+)</name>
        <dbReference type="ChEBI" id="CHEBI:29108"/>
        <label>1</label>
    </ligand>
</feature>
<feature type="binding site" evidence="1">
    <location>
        <position position="403"/>
    </location>
    <ligand>
        <name>Ca(2+)</name>
        <dbReference type="ChEBI" id="CHEBI:29108"/>
        <label>2</label>
    </ligand>
</feature>
<feature type="binding site" evidence="1">
    <location>
        <position position="406"/>
    </location>
    <ligand>
        <name>Ca(2+)</name>
        <dbReference type="ChEBI" id="CHEBI:29108"/>
        <label>2</label>
    </ligand>
</feature>
<feature type="binding site" evidence="1">
    <location>
        <position position="408"/>
    </location>
    <ligand>
        <name>Ca(2+)</name>
        <dbReference type="ChEBI" id="CHEBI:29108"/>
        <label>2</label>
    </ligand>
</feature>
<feature type="binding site" evidence="1">
    <location>
        <position position="410"/>
    </location>
    <ligand>
        <name>Ca(2+)</name>
        <dbReference type="ChEBI" id="CHEBI:29108"/>
        <label>2</label>
    </ligand>
</feature>
<feature type="binding site" evidence="1">
    <location>
        <position position="413"/>
    </location>
    <ligand>
        <name>Ca(2+)</name>
        <dbReference type="ChEBI" id="CHEBI:29108"/>
        <label>2</label>
    </ligand>
</feature>
<feature type="modified residue" description="Pyrrolidone carboxylic acid" evidence="1">
    <location>
        <position position="191"/>
    </location>
</feature>
<feature type="disulfide bond" evidence="3">
    <location>
        <begin position="308"/>
        <end position="388"/>
    </location>
</feature>
<feature type="disulfide bond" evidence="3">
    <location>
        <begin position="348"/>
        <end position="355"/>
    </location>
</feature>
<reference key="1">
    <citation type="journal article" date="1994" name="Arch. Biochem. Biophys.">
        <title>cDNA sequences for four snake venom metalloproteinases: structure, classification, and their relationship to mammalian reproductive proteins.</title>
        <authorList>
            <person name="Hite L.A."/>
            <person name="Jia L.-G."/>
            <person name="Bjarnason J.B."/>
            <person name="Fox J.W."/>
        </authorList>
    </citation>
    <scope>NUCLEOTIDE SEQUENCE [MRNA]</scope>
    <source>
        <tissue>Venom gland</tissue>
    </source>
</reference>
<reference key="2">
    <citation type="journal article" date="2009" name="J. Proteome Res.">
        <title>Exploring the venom proteome of the western diamondback rattlesnake, Crotalus atrox, via snake venomics and combinatorial peptide ligand library approaches.</title>
        <authorList>
            <person name="Calvete J.J."/>
            <person name="Fasoli E."/>
            <person name="Sanz L."/>
            <person name="Boschetti E."/>
            <person name="Righetti P.G."/>
        </authorList>
    </citation>
    <scope>PROTEIN SEQUENCE OF 109-126; 188-208; 213-221; 224-236; 264-273; 282-297; 302-311 AND 351-365</scope>
    <scope>IDENTIFICATION BY MASS SPECTROMETRY</scope>
    <source>
        <tissue>Venom</tissue>
    </source>
</reference>
<name>VM1AB_CROAT</name>
<sequence>MIEVLLVTICLAVFPYQGSSIILESGNVNDYEVVYPRKVTALPKGAVQPKYEDAMQYELKVNGEPVVLHLEKNKELFSKDYSETHYSPDGRKITTNPSVEDHCYYRGRIENDADSTASISACNGLKGHFKLQGEMYLIEPLELSDSEAHAVFKYENVEKEDEAPKMCGVTQNWESYEPIKKASDLNLNPDQQNLPQRYIELVVVADHRVFMKYNSDLNIIRKRVHELVNTINGFYRSLNIDVSLTDLEIWSDQDFITVQSSAKNTLNSFGEWREADLLRRKSHDHAQLLTAINFEGKIIGRAYTSSMCNPRKSVGIVKDHSPINLLVGVTMAHELGHNLGMNHDGDKCLRGASLCIMRPGLTPGRSYEFSDDSMGYYQSFLNQYKPQCILNKPLRIDPVSTPVSGNELLEAGEE</sequence>
<accession>Q90391</accession>
<keyword id="KW-0106">Calcium</keyword>
<keyword id="KW-0903">Direct protein sequencing</keyword>
<keyword id="KW-1015">Disulfide bond</keyword>
<keyword id="KW-1199">Hemostasis impairing toxin</keyword>
<keyword id="KW-0378">Hydrolase</keyword>
<keyword id="KW-0479">Metal-binding</keyword>
<keyword id="KW-0482">Metalloprotease</keyword>
<keyword id="KW-0645">Protease</keyword>
<keyword id="KW-0873">Pyrrolidone carboxylic acid</keyword>
<keyword id="KW-0964">Secreted</keyword>
<keyword id="KW-0732">Signal</keyword>
<keyword id="KW-0800">Toxin</keyword>
<keyword id="KW-0862">Zinc</keyword>
<keyword id="KW-0865">Zymogen</keyword>
<comment type="function">
    <text evidence="1">Snake venom metalloproteinase that impairs hemostasis in the envenomed animal.</text>
</comment>
<comment type="catalytic activity">
    <reaction>
        <text>Cleavage of 5-His-|-Leu-6, 10-His-|-Leu-11, 14-Ala-|-Leu-15, 16-Tyr-|-Leu-17 and 23-Gly-|-Phe-24 of insulin B chain. Identical to the cleavage of insulin B chain by atrolysin C. Also cleaves Xaa-|-Ser bonds in glucagon.</text>
        <dbReference type="EC" id="3.4.24.41"/>
    </reaction>
</comment>
<comment type="cofactor">
    <cofactor evidence="1">
        <name>Zn(2+)</name>
        <dbReference type="ChEBI" id="CHEBI:29105"/>
    </cofactor>
    <text evidence="1">Binds 1 zinc ion per subunit.</text>
</comment>
<comment type="subunit">
    <text evidence="1">Monomer.</text>
</comment>
<comment type="subcellular location">
    <subcellularLocation>
        <location evidence="1">Secreted</location>
    </subcellularLocation>
</comment>
<comment type="tissue specificity">
    <text>Expressed by the venom gland.</text>
</comment>
<comment type="PTM">
    <text>The N-terminus is blocked.</text>
</comment>
<comment type="similarity">
    <text evidence="5">Belongs to the venom metalloproteinase (M12B) family. P-I subfamily.</text>
</comment>
<evidence type="ECO:0000250" key="1"/>
<evidence type="ECO:0000255" key="2"/>
<evidence type="ECO:0000255" key="3">
    <source>
        <dbReference type="PROSITE-ProRule" id="PRU00276"/>
    </source>
</evidence>
<evidence type="ECO:0000255" key="4">
    <source>
        <dbReference type="PROSITE-ProRule" id="PRU10095"/>
    </source>
</evidence>
<evidence type="ECO:0000305" key="5"/>
<proteinExistence type="evidence at protein level"/>
<dbReference type="EC" id="3.4.24.41"/>
<dbReference type="EMBL" id="U01235">
    <property type="protein sequence ID" value="AAA03327.1"/>
    <property type="molecule type" value="mRNA"/>
</dbReference>
<dbReference type="PIR" id="S41608">
    <property type="entry name" value="S41608"/>
</dbReference>
<dbReference type="SMR" id="Q90391"/>
<dbReference type="MEROPS" id="M12.143"/>
<dbReference type="GO" id="GO:0005576">
    <property type="term" value="C:extracellular region"/>
    <property type="evidence" value="ECO:0007669"/>
    <property type="project" value="UniProtKB-SubCell"/>
</dbReference>
<dbReference type="GO" id="GO:0005886">
    <property type="term" value="C:plasma membrane"/>
    <property type="evidence" value="ECO:0007669"/>
    <property type="project" value="TreeGrafter"/>
</dbReference>
<dbReference type="GO" id="GO:0046872">
    <property type="term" value="F:metal ion binding"/>
    <property type="evidence" value="ECO:0007669"/>
    <property type="project" value="UniProtKB-KW"/>
</dbReference>
<dbReference type="GO" id="GO:0004222">
    <property type="term" value="F:metalloendopeptidase activity"/>
    <property type="evidence" value="ECO:0007669"/>
    <property type="project" value="InterPro"/>
</dbReference>
<dbReference type="GO" id="GO:0090729">
    <property type="term" value="F:toxin activity"/>
    <property type="evidence" value="ECO:0007669"/>
    <property type="project" value="UniProtKB-KW"/>
</dbReference>
<dbReference type="GO" id="GO:0006508">
    <property type="term" value="P:proteolysis"/>
    <property type="evidence" value="ECO:0007669"/>
    <property type="project" value="UniProtKB-KW"/>
</dbReference>
<dbReference type="CDD" id="cd04269">
    <property type="entry name" value="ZnMc_adamalysin_II_like"/>
    <property type="match status" value="1"/>
</dbReference>
<dbReference type="FunFam" id="3.40.390.10:FF:000002">
    <property type="entry name" value="Disintegrin and metalloproteinase domain-containing protein 22"/>
    <property type="match status" value="1"/>
</dbReference>
<dbReference type="Gene3D" id="3.40.390.10">
    <property type="entry name" value="Collagenase (Catalytic Domain)"/>
    <property type="match status" value="1"/>
</dbReference>
<dbReference type="InterPro" id="IPR024079">
    <property type="entry name" value="MetalloPept_cat_dom_sf"/>
</dbReference>
<dbReference type="InterPro" id="IPR001590">
    <property type="entry name" value="Peptidase_M12B"/>
</dbReference>
<dbReference type="InterPro" id="IPR002870">
    <property type="entry name" value="Peptidase_M12B_N"/>
</dbReference>
<dbReference type="InterPro" id="IPR034027">
    <property type="entry name" value="Reprolysin_adamalysin"/>
</dbReference>
<dbReference type="PANTHER" id="PTHR11905">
    <property type="entry name" value="ADAM A DISINTEGRIN AND METALLOPROTEASE DOMAIN"/>
    <property type="match status" value="1"/>
</dbReference>
<dbReference type="PANTHER" id="PTHR11905:SF32">
    <property type="entry name" value="DISINTEGRIN AND METALLOPROTEINASE DOMAIN-CONTAINING PROTEIN 28"/>
    <property type="match status" value="1"/>
</dbReference>
<dbReference type="Pfam" id="PF01562">
    <property type="entry name" value="Pep_M12B_propep"/>
    <property type="match status" value="1"/>
</dbReference>
<dbReference type="Pfam" id="PF01421">
    <property type="entry name" value="Reprolysin"/>
    <property type="match status" value="1"/>
</dbReference>
<dbReference type="SUPFAM" id="SSF55486">
    <property type="entry name" value="Metalloproteases ('zincins'), catalytic domain"/>
    <property type="match status" value="1"/>
</dbReference>
<dbReference type="PROSITE" id="PS50215">
    <property type="entry name" value="ADAM_MEPRO"/>
    <property type="match status" value="1"/>
</dbReference>
<dbReference type="PROSITE" id="PS00142">
    <property type="entry name" value="ZINC_PROTEASE"/>
    <property type="match status" value="1"/>
</dbReference>
<protein>
    <recommendedName>
        <fullName>Snake venom metalloproteinase atrolysin-B</fullName>
        <shortName>SVMP</shortName>
        <ecNumber>3.4.24.41</ecNumber>
    </recommendedName>
    <alternativeName>
        <fullName>Hemorrhagic toxin B</fullName>
        <shortName>HT-B</shortName>
    </alternativeName>
    <alternativeName>
        <fullName>Metalloendopeptidase B</fullName>
    </alternativeName>
</protein>
<organism>
    <name type="scientific">Crotalus atrox</name>
    <name type="common">Western diamondback rattlesnake</name>
    <dbReference type="NCBI Taxonomy" id="8730"/>
    <lineage>
        <taxon>Eukaryota</taxon>
        <taxon>Metazoa</taxon>
        <taxon>Chordata</taxon>
        <taxon>Craniata</taxon>
        <taxon>Vertebrata</taxon>
        <taxon>Euteleostomi</taxon>
        <taxon>Lepidosauria</taxon>
        <taxon>Squamata</taxon>
        <taxon>Bifurcata</taxon>
        <taxon>Unidentata</taxon>
        <taxon>Episquamata</taxon>
        <taxon>Toxicofera</taxon>
        <taxon>Serpentes</taxon>
        <taxon>Colubroidea</taxon>
        <taxon>Viperidae</taxon>
        <taxon>Crotalinae</taxon>
        <taxon>Crotalus</taxon>
    </lineage>
</organism>